<sequence length="222" mass="24026">MAASPDLTGFALDRARMIDTQLRQRGIRDERVLNAMATIPREEFVVARYHPDAYADHPLPIPLGQTISQPYIVARMLEAAQIAPADKVLEVGTGTGYQAALLGALAAQVFTIERHAELAALARIHLEHLGYTNISVITGDGSEGLADQAPFDVILVAAAVPDFPPALFHQLAEGGRMVIPVGSPELQALYVVRKQAGRLQRTKLDDCRFVPLIGNQGYSPAR</sequence>
<comment type="function">
    <text evidence="1">Catalyzes the methyl esterification of L-isoaspartyl residues in peptides and proteins that result from spontaneous decomposition of normal L-aspartyl and L-asparaginyl residues. It plays a role in the repair and/or degradation of damaged proteins.</text>
</comment>
<comment type="catalytic activity">
    <reaction evidence="1">
        <text>[protein]-L-isoaspartate + S-adenosyl-L-methionine = [protein]-L-isoaspartate alpha-methyl ester + S-adenosyl-L-homocysteine</text>
        <dbReference type="Rhea" id="RHEA:12705"/>
        <dbReference type="Rhea" id="RHEA-COMP:12143"/>
        <dbReference type="Rhea" id="RHEA-COMP:12144"/>
        <dbReference type="ChEBI" id="CHEBI:57856"/>
        <dbReference type="ChEBI" id="CHEBI:59789"/>
        <dbReference type="ChEBI" id="CHEBI:90596"/>
        <dbReference type="ChEBI" id="CHEBI:90598"/>
        <dbReference type="EC" id="2.1.1.77"/>
    </reaction>
</comment>
<comment type="subcellular location">
    <subcellularLocation>
        <location evidence="1">Cytoplasm</location>
    </subcellularLocation>
</comment>
<comment type="similarity">
    <text evidence="1">Belongs to the methyltransferase superfamily. L-isoaspartyl/D-aspartyl protein methyltransferase family.</text>
</comment>
<accession>Q1INS6</accession>
<evidence type="ECO:0000255" key="1">
    <source>
        <dbReference type="HAMAP-Rule" id="MF_00090"/>
    </source>
</evidence>
<protein>
    <recommendedName>
        <fullName evidence="1">Protein-L-isoaspartate O-methyltransferase</fullName>
        <ecNumber evidence="1">2.1.1.77</ecNumber>
    </recommendedName>
    <alternativeName>
        <fullName evidence="1">L-isoaspartyl protein carboxyl methyltransferase</fullName>
    </alternativeName>
    <alternativeName>
        <fullName evidence="1">Protein L-isoaspartyl methyltransferase</fullName>
    </alternativeName>
    <alternativeName>
        <fullName evidence="1">Protein-beta-aspartate methyltransferase</fullName>
        <shortName evidence="1">PIMT</shortName>
    </alternativeName>
</protein>
<dbReference type="EC" id="2.1.1.77" evidence="1"/>
<dbReference type="EMBL" id="CP000360">
    <property type="protein sequence ID" value="ABF41474.1"/>
    <property type="molecule type" value="Genomic_DNA"/>
</dbReference>
<dbReference type="RefSeq" id="WP_011523275.1">
    <property type="nucleotide sequence ID" value="NC_008009.1"/>
</dbReference>
<dbReference type="SMR" id="Q1INS6"/>
<dbReference type="STRING" id="204669.Acid345_2473"/>
<dbReference type="EnsemblBacteria" id="ABF41474">
    <property type="protein sequence ID" value="ABF41474"/>
    <property type="gene ID" value="Acid345_2473"/>
</dbReference>
<dbReference type="KEGG" id="aba:Acid345_2473"/>
<dbReference type="eggNOG" id="COG2518">
    <property type="taxonomic scope" value="Bacteria"/>
</dbReference>
<dbReference type="HOGENOM" id="CLU_055432_2_0_0"/>
<dbReference type="OrthoDB" id="9772751at2"/>
<dbReference type="Proteomes" id="UP000002432">
    <property type="component" value="Chromosome"/>
</dbReference>
<dbReference type="GO" id="GO:0005737">
    <property type="term" value="C:cytoplasm"/>
    <property type="evidence" value="ECO:0007669"/>
    <property type="project" value="UniProtKB-SubCell"/>
</dbReference>
<dbReference type="GO" id="GO:0004719">
    <property type="term" value="F:protein-L-isoaspartate (D-aspartate) O-methyltransferase activity"/>
    <property type="evidence" value="ECO:0007669"/>
    <property type="project" value="UniProtKB-UniRule"/>
</dbReference>
<dbReference type="GO" id="GO:0032259">
    <property type="term" value="P:methylation"/>
    <property type="evidence" value="ECO:0007669"/>
    <property type="project" value="UniProtKB-KW"/>
</dbReference>
<dbReference type="GO" id="GO:0036211">
    <property type="term" value="P:protein modification process"/>
    <property type="evidence" value="ECO:0007669"/>
    <property type="project" value="UniProtKB-UniRule"/>
</dbReference>
<dbReference type="GO" id="GO:0030091">
    <property type="term" value="P:protein repair"/>
    <property type="evidence" value="ECO:0007669"/>
    <property type="project" value="UniProtKB-UniRule"/>
</dbReference>
<dbReference type="CDD" id="cd02440">
    <property type="entry name" value="AdoMet_MTases"/>
    <property type="match status" value="1"/>
</dbReference>
<dbReference type="FunFam" id="3.40.50.150:FF:000010">
    <property type="entry name" value="Protein-L-isoaspartate O-methyltransferase"/>
    <property type="match status" value="1"/>
</dbReference>
<dbReference type="Gene3D" id="3.40.50.150">
    <property type="entry name" value="Vaccinia Virus protein VP39"/>
    <property type="match status" value="1"/>
</dbReference>
<dbReference type="HAMAP" id="MF_00090">
    <property type="entry name" value="PIMT"/>
    <property type="match status" value="1"/>
</dbReference>
<dbReference type="InterPro" id="IPR000682">
    <property type="entry name" value="PCMT"/>
</dbReference>
<dbReference type="InterPro" id="IPR029063">
    <property type="entry name" value="SAM-dependent_MTases_sf"/>
</dbReference>
<dbReference type="NCBIfam" id="TIGR00080">
    <property type="entry name" value="pimt"/>
    <property type="match status" value="1"/>
</dbReference>
<dbReference type="NCBIfam" id="NF001453">
    <property type="entry name" value="PRK00312.1"/>
    <property type="match status" value="1"/>
</dbReference>
<dbReference type="PANTHER" id="PTHR11579">
    <property type="entry name" value="PROTEIN-L-ISOASPARTATE O-METHYLTRANSFERASE"/>
    <property type="match status" value="1"/>
</dbReference>
<dbReference type="PANTHER" id="PTHR11579:SF0">
    <property type="entry name" value="PROTEIN-L-ISOASPARTATE(D-ASPARTATE) O-METHYLTRANSFERASE"/>
    <property type="match status" value="1"/>
</dbReference>
<dbReference type="Pfam" id="PF01135">
    <property type="entry name" value="PCMT"/>
    <property type="match status" value="1"/>
</dbReference>
<dbReference type="SUPFAM" id="SSF53335">
    <property type="entry name" value="S-adenosyl-L-methionine-dependent methyltransferases"/>
    <property type="match status" value="1"/>
</dbReference>
<dbReference type="PROSITE" id="PS01279">
    <property type="entry name" value="PCMT"/>
    <property type="match status" value="1"/>
</dbReference>
<feature type="chain" id="PRO_0000351807" description="Protein-L-isoaspartate O-methyltransferase">
    <location>
        <begin position="1"/>
        <end position="222"/>
    </location>
</feature>
<feature type="active site" evidence="1">
    <location>
        <position position="68"/>
    </location>
</feature>
<proteinExistence type="inferred from homology"/>
<keyword id="KW-0963">Cytoplasm</keyword>
<keyword id="KW-0489">Methyltransferase</keyword>
<keyword id="KW-1185">Reference proteome</keyword>
<keyword id="KW-0949">S-adenosyl-L-methionine</keyword>
<keyword id="KW-0808">Transferase</keyword>
<gene>
    <name evidence="1" type="primary">pcm</name>
    <name type="ordered locus">Acid345_2473</name>
</gene>
<organism>
    <name type="scientific">Koribacter versatilis (strain Ellin345)</name>
    <dbReference type="NCBI Taxonomy" id="204669"/>
    <lineage>
        <taxon>Bacteria</taxon>
        <taxon>Pseudomonadati</taxon>
        <taxon>Acidobacteriota</taxon>
        <taxon>Terriglobia</taxon>
        <taxon>Terriglobales</taxon>
        <taxon>Candidatus Korobacteraceae</taxon>
        <taxon>Candidatus Korobacter</taxon>
    </lineage>
</organism>
<name>PIMT_KORVE</name>
<reference key="1">
    <citation type="journal article" date="2009" name="Appl. Environ. Microbiol.">
        <title>Three genomes from the phylum Acidobacteria provide insight into the lifestyles of these microorganisms in soils.</title>
        <authorList>
            <person name="Ward N.L."/>
            <person name="Challacombe J.F."/>
            <person name="Janssen P.H."/>
            <person name="Henrissat B."/>
            <person name="Coutinho P.M."/>
            <person name="Wu M."/>
            <person name="Xie G."/>
            <person name="Haft D.H."/>
            <person name="Sait M."/>
            <person name="Badger J."/>
            <person name="Barabote R.D."/>
            <person name="Bradley B."/>
            <person name="Brettin T.S."/>
            <person name="Brinkac L.M."/>
            <person name="Bruce D."/>
            <person name="Creasy T."/>
            <person name="Daugherty S.C."/>
            <person name="Davidsen T.M."/>
            <person name="DeBoy R.T."/>
            <person name="Detter J.C."/>
            <person name="Dodson R.J."/>
            <person name="Durkin A.S."/>
            <person name="Ganapathy A."/>
            <person name="Gwinn-Giglio M."/>
            <person name="Han C.S."/>
            <person name="Khouri H."/>
            <person name="Kiss H."/>
            <person name="Kothari S.P."/>
            <person name="Madupu R."/>
            <person name="Nelson K.E."/>
            <person name="Nelson W.C."/>
            <person name="Paulsen I."/>
            <person name="Penn K."/>
            <person name="Ren Q."/>
            <person name="Rosovitz M.J."/>
            <person name="Selengut J.D."/>
            <person name="Shrivastava S."/>
            <person name="Sullivan S.A."/>
            <person name="Tapia R."/>
            <person name="Thompson L.S."/>
            <person name="Watkins K.L."/>
            <person name="Yang Q."/>
            <person name="Yu C."/>
            <person name="Zafar N."/>
            <person name="Zhou L."/>
            <person name="Kuske C.R."/>
        </authorList>
    </citation>
    <scope>NUCLEOTIDE SEQUENCE [LARGE SCALE GENOMIC DNA]</scope>
    <source>
        <strain>Ellin345</strain>
    </source>
</reference>